<proteinExistence type="evidence at transcript level"/>
<protein>
    <recommendedName>
        <fullName>Esterase OVCA2</fullName>
        <ecNumber evidence="2">3.1.1.1</ecNumber>
    </recommendedName>
    <alternativeName>
        <fullName>OVCA2 serine hydrolase domain-containing protein</fullName>
    </alternativeName>
    <alternativeName>
        <fullName>Ovarian cancer-associated gene 2 protein homolog</fullName>
    </alternativeName>
</protein>
<feature type="chain" id="PRO_0000300879" description="Esterase OVCA2">
    <location>
        <begin position="1"/>
        <end position="230"/>
    </location>
</feature>
<feature type="active site" description="Charge relay system" evidence="1">
    <location>
        <position position="124"/>
    </location>
</feature>
<feature type="active site" description="Charge relay system" evidence="1">
    <location>
        <position position="182"/>
    </location>
</feature>
<feature type="active site" description="Charge relay system" evidence="1">
    <location>
        <position position="209"/>
    </location>
</feature>
<keyword id="KW-0378">Hydrolase</keyword>
<keyword id="KW-1185">Reference proteome</keyword>
<keyword id="KW-0719">Serine esterase</keyword>
<sequence>MAATETPGAAQKRVLRVLALHGYRQNERSFWERTGALRKRLRGRADLITFSAPLLVPDPDAEPGAGDPDSLQDESRGWWFSNPEQNSFDAMEESKTCSGLEAPLDTVAKAFSELGPFDGILGFSQGAALVAIICALKQQGDPRFHFDFAILVAGFKSLSTDHAKHYQQPITVPSLHVIGETDRVISAAMSQELVSHFENPVILMHSGGHYVPACAPQKKVYWEFLDKFLT</sequence>
<dbReference type="EC" id="3.1.1.1" evidence="2"/>
<dbReference type="EMBL" id="BC135890">
    <property type="protein sequence ID" value="AAI35891.1"/>
    <property type="status" value="ALT_INIT"/>
    <property type="molecule type" value="mRNA"/>
</dbReference>
<dbReference type="SMR" id="A4II73"/>
<dbReference type="FunCoup" id="A4II73">
    <property type="interactions" value="1429"/>
</dbReference>
<dbReference type="STRING" id="8364.ENSXETP00000035832"/>
<dbReference type="ESTHER" id="xentr-ovca2">
    <property type="family name" value="FSH1"/>
</dbReference>
<dbReference type="PaxDb" id="8364-ENSXETP00000051350"/>
<dbReference type="eggNOG" id="KOG2551">
    <property type="taxonomic scope" value="Eukaryota"/>
</dbReference>
<dbReference type="InParanoid" id="A4II73"/>
<dbReference type="OrthoDB" id="414698at2759"/>
<dbReference type="Proteomes" id="UP000008143">
    <property type="component" value="Unplaced"/>
</dbReference>
<dbReference type="GO" id="GO:0016787">
    <property type="term" value="F:hydrolase activity"/>
    <property type="evidence" value="ECO:0007669"/>
    <property type="project" value="UniProtKB-KW"/>
</dbReference>
<dbReference type="FunFam" id="3.40.50.1820:FF:000073">
    <property type="entry name" value="esterase OVCA2 isoform X6"/>
    <property type="match status" value="1"/>
</dbReference>
<dbReference type="Gene3D" id="3.40.50.1820">
    <property type="entry name" value="alpha/beta hydrolase"/>
    <property type="match status" value="1"/>
</dbReference>
<dbReference type="InterPro" id="IPR029058">
    <property type="entry name" value="AB_hydrolase_fold"/>
</dbReference>
<dbReference type="InterPro" id="IPR005645">
    <property type="entry name" value="FSH-like_dom"/>
</dbReference>
<dbReference type="InterPro" id="IPR050593">
    <property type="entry name" value="LovG"/>
</dbReference>
<dbReference type="PANTHER" id="PTHR48070">
    <property type="entry name" value="ESTERASE OVCA2"/>
    <property type="match status" value="1"/>
</dbReference>
<dbReference type="PANTHER" id="PTHR48070:SF6">
    <property type="entry name" value="ESTERASE OVCA2"/>
    <property type="match status" value="1"/>
</dbReference>
<dbReference type="Pfam" id="PF03959">
    <property type="entry name" value="FSH1"/>
    <property type="match status" value="1"/>
</dbReference>
<dbReference type="SUPFAM" id="SSF53474">
    <property type="entry name" value="alpha/beta-Hydrolases"/>
    <property type="match status" value="1"/>
</dbReference>
<name>OVCA2_XENTR</name>
<reference key="1">
    <citation type="submission" date="2007-03" db="EMBL/GenBank/DDBJ databases">
        <authorList>
            <consortium name="NIH - Xenopus Gene Collection (XGC) project"/>
        </authorList>
    </citation>
    <scope>NUCLEOTIDE SEQUENCE [LARGE SCALE MRNA]</scope>
</reference>
<comment type="function">
    <text evidence="2">Exhibits ester hydrolase activity with a strong preference for long-chain alkyl ester substrates and high selectivity against a variety of short, branched, and substituted esters. Is able to hydrolyze ester bonds within a wide range of p-nitrophenyl derivatives (C2-C14) in vitro, with a strong preference toward substrates of &gt;8 carbons.</text>
</comment>
<comment type="catalytic activity">
    <reaction evidence="2">
        <text>a carboxylic ester + H2O = an alcohol + a carboxylate + H(+)</text>
        <dbReference type="Rhea" id="RHEA:21164"/>
        <dbReference type="ChEBI" id="CHEBI:15377"/>
        <dbReference type="ChEBI" id="CHEBI:15378"/>
        <dbReference type="ChEBI" id="CHEBI:29067"/>
        <dbReference type="ChEBI" id="CHEBI:30879"/>
        <dbReference type="ChEBI" id="CHEBI:33308"/>
        <dbReference type="EC" id="3.1.1.1"/>
    </reaction>
</comment>
<comment type="similarity">
    <text evidence="3">Belongs to the LovG family.</text>
</comment>
<comment type="sequence caution" evidence="3">
    <conflict type="erroneous initiation">
        <sequence resource="EMBL-CDS" id="AAI35891"/>
    </conflict>
</comment>
<evidence type="ECO:0000250" key="1">
    <source>
        <dbReference type="UniProtKB" id="P38777"/>
    </source>
</evidence>
<evidence type="ECO:0000250" key="2">
    <source>
        <dbReference type="UniProtKB" id="Q8WZ82"/>
    </source>
</evidence>
<evidence type="ECO:0000305" key="3"/>
<accession>A4II73</accession>
<organism>
    <name type="scientific">Xenopus tropicalis</name>
    <name type="common">Western clawed frog</name>
    <name type="synonym">Silurana tropicalis</name>
    <dbReference type="NCBI Taxonomy" id="8364"/>
    <lineage>
        <taxon>Eukaryota</taxon>
        <taxon>Metazoa</taxon>
        <taxon>Chordata</taxon>
        <taxon>Craniata</taxon>
        <taxon>Vertebrata</taxon>
        <taxon>Euteleostomi</taxon>
        <taxon>Amphibia</taxon>
        <taxon>Batrachia</taxon>
        <taxon>Anura</taxon>
        <taxon>Pipoidea</taxon>
        <taxon>Pipidae</taxon>
        <taxon>Xenopodinae</taxon>
        <taxon>Xenopus</taxon>
        <taxon>Silurana</taxon>
    </lineage>
</organism>
<gene>
    <name type="primary">ovca2</name>
</gene>